<feature type="chain" id="PRO_0000142584" description="Histidinol-phosphatase">
    <location>
        <begin position="1"/>
        <end position="259"/>
    </location>
</feature>
<feature type="binding site" evidence="1">
    <location>
        <position position="66"/>
    </location>
    <ligand>
        <name>Mg(2+)</name>
        <dbReference type="ChEBI" id="CHEBI:18420"/>
        <label>1</label>
    </ligand>
</feature>
<feature type="binding site" evidence="1">
    <location>
        <position position="66"/>
    </location>
    <ligand>
        <name>substrate</name>
    </ligand>
</feature>
<feature type="binding site" evidence="1">
    <location>
        <position position="82"/>
    </location>
    <ligand>
        <name>Mg(2+)</name>
        <dbReference type="ChEBI" id="CHEBI:18420"/>
        <label>1</label>
    </ligand>
</feature>
<feature type="binding site" evidence="1">
    <location>
        <position position="82"/>
    </location>
    <ligand>
        <name>Mg(2+)</name>
        <dbReference type="ChEBI" id="CHEBI:18420"/>
        <label>2</label>
    </ligand>
</feature>
<feature type="binding site" evidence="1">
    <location>
        <begin position="84"/>
        <end position="87"/>
    </location>
    <ligand>
        <name>substrate</name>
    </ligand>
</feature>
<feature type="binding site" evidence="1">
    <location>
        <position position="84"/>
    </location>
    <ligand>
        <name>Mg(2+)</name>
        <dbReference type="ChEBI" id="CHEBI:18420"/>
        <label>1</label>
    </ligand>
</feature>
<feature type="binding site" evidence="1">
    <location>
        <position position="85"/>
    </location>
    <ligand>
        <name>Mg(2+)</name>
        <dbReference type="ChEBI" id="CHEBI:18420"/>
        <label>2</label>
    </ligand>
</feature>
<feature type="binding site" evidence="1">
    <location>
        <position position="207"/>
    </location>
    <ligand>
        <name>Mg(2+)</name>
        <dbReference type="ChEBI" id="CHEBI:18420"/>
        <label>2</label>
    </ligand>
</feature>
<feature type="binding site" evidence="1">
    <location>
        <position position="207"/>
    </location>
    <ligand>
        <name>substrate</name>
    </ligand>
</feature>
<feature type="sequence conflict" description="In Ref. 1; U38348." evidence="2" ref="1">
    <original>L</original>
    <variation>LAL</variation>
    <location>
        <position position="9"/>
    </location>
</feature>
<gene>
    <name type="primary">hisN</name>
    <name type="ordered locus">Cpar_0733</name>
</gene>
<accession>P56160</accession>
<protein>
    <recommendedName>
        <fullName>Histidinol-phosphatase</fullName>
        <shortName>HolPase</shortName>
        <ecNumber>3.1.3.15</ecNumber>
    </recommendedName>
    <alternativeName>
        <fullName>Histidinol-phosphate phosphatase</fullName>
    </alternativeName>
</protein>
<proteinExistence type="inferred from homology"/>
<reference key="1">
    <citation type="journal article" date="1996" name="J. Biol. Chem.">
        <title>Structure and expression of the Chlorobium vibrioforme hemB gene and characterization of its encoded enzyme, porphobilinogen synthase.</title>
        <authorList>
            <person name="Rhie G.-E."/>
            <person name="Avissar Y.J."/>
            <person name="Beale S.I."/>
        </authorList>
    </citation>
    <scope>NUCLEOTIDE SEQUENCE [GENOMIC DNA]</scope>
</reference>
<reference key="2">
    <citation type="submission" date="2008-06" db="EMBL/GenBank/DDBJ databases">
        <title>Complete sequence of Chlorobaculum parvum NCIB 8327.</title>
        <authorList>
            <consortium name="US DOE Joint Genome Institute"/>
            <person name="Lucas S."/>
            <person name="Copeland A."/>
            <person name="Lapidus A."/>
            <person name="Glavina del Rio T."/>
            <person name="Dalin E."/>
            <person name="Tice H."/>
            <person name="Bruce D."/>
            <person name="Goodwin L."/>
            <person name="Pitluck S."/>
            <person name="Schmutz J."/>
            <person name="Larimer F."/>
            <person name="Land M."/>
            <person name="Hauser L."/>
            <person name="Kyrpides N."/>
            <person name="Mikhailova N."/>
            <person name="Zhao F."/>
            <person name="Li T."/>
            <person name="Liu Z."/>
            <person name="Overmann J."/>
            <person name="Bryant D.A."/>
            <person name="Richardson P."/>
        </authorList>
    </citation>
    <scope>NUCLEOTIDE SEQUENCE [LARGE SCALE GENOMIC DNA]</scope>
    <source>
        <strain>DSM 263 / NCIMB 8327</strain>
    </source>
</reference>
<evidence type="ECO:0000250" key="1"/>
<evidence type="ECO:0000305" key="2"/>
<sequence>MTPDLQLALELAEKAGKLTLDYFGRRSLQVFSKRDDTPVTEADRNAEELIRQGISAKFPDDGLFGEEFDEHPSGNGRRWIIDPIDGTRSFIHGVPLYGVMIALEVEGAMQLGVINFPALGELYQAERGSGAFMNGSPVQVSAIAENSASTVVFTEKEYLLDPPSNHPVDQLRIDAGLVRGWGDCYGHMLVASGRAEVAVDKIMSPWDCAAVIPIVEEAGGCCFDYRGRQSIIDGEGLVSANNAMGRNLIAAIGNGERDR</sequence>
<comment type="function">
    <text evidence="1">Catalyzes the dephosphorylation of histidinol-phosphate to histidinol, the direct precursor of histidine.</text>
</comment>
<comment type="catalytic activity">
    <reaction>
        <text>L-histidinol phosphate + H2O = L-histidinol + phosphate</text>
        <dbReference type="Rhea" id="RHEA:14465"/>
        <dbReference type="ChEBI" id="CHEBI:15377"/>
        <dbReference type="ChEBI" id="CHEBI:43474"/>
        <dbReference type="ChEBI" id="CHEBI:57699"/>
        <dbReference type="ChEBI" id="CHEBI:57980"/>
        <dbReference type="EC" id="3.1.3.15"/>
    </reaction>
</comment>
<comment type="cofactor">
    <cofactor evidence="1">
        <name>Mg(2+)</name>
        <dbReference type="ChEBI" id="CHEBI:18420"/>
    </cofactor>
</comment>
<comment type="pathway">
    <text>Amino-acid biosynthesis; L-histidine biosynthesis; L-histidine from 5-phospho-alpha-D-ribose 1-diphosphate: step 8/9.</text>
</comment>
<comment type="similarity">
    <text evidence="2">Belongs to the inositol monophosphatase superfamily.</text>
</comment>
<comment type="sequence caution" evidence="2">
    <conflict type="frameshift">
        <sequence resource="EMBL" id="CP001099"/>
    </conflict>
</comment>
<name>HISN_CHLP8</name>
<organism>
    <name type="scientific">Chlorobaculum parvum (strain DSM 263 / NCIMB 8327)</name>
    <name type="common">Chlorobium vibrioforme subsp. thiosulfatophilum</name>
    <dbReference type="NCBI Taxonomy" id="517417"/>
    <lineage>
        <taxon>Bacteria</taxon>
        <taxon>Pseudomonadati</taxon>
        <taxon>Chlorobiota</taxon>
        <taxon>Chlorobiia</taxon>
        <taxon>Chlorobiales</taxon>
        <taxon>Chlorobiaceae</taxon>
        <taxon>Chlorobaculum</taxon>
    </lineage>
</organism>
<keyword id="KW-0028">Amino-acid biosynthesis</keyword>
<keyword id="KW-0368">Histidine biosynthesis</keyword>
<keyword id="KW-0378">Hydrolase</keyword>
<keyword id="KW-0460">Magnesium</keyword>
<keyword id="KW-0479">Metal-binding</keyword>
<dbReference type="EC" id="3.1.3.15"/>
<dbReference type="EMBL" id="U38348">
    <property type="status" value="NOT_ANNOTATED_CDS"/>
    <property type="molecule type" value="Genomic_DNA"/>
</dbReference>
<dbReference type="EMBL" id="CP001099">
    <property type="status" value="NOT_ANNOTATED_CDS"/>
    <property type="molecule type" value="Genomic_DNA"/>
</dbReference>
<dbReference type="SMR" id="P56160"/>
<dbReference type="UniPathway" id="UPA00031">
    <property type="reaction ID" value="UER00013"/>
</dbReference>
<dbReference type="Proteomes" id="UP000008811">
    <property type="component" value="Chromosome"/>
</dbReference>
<dbReference type="GO" id="GO:0004401">
    <property type="term" value="F:histidinol-phosphatase activity"/>
    <property type="evidence" value="ECO:0007669"/>
    <property type="project" value="UniProtKB-EC"/>
</dbReference>
<dbReference type="GO" id="GO:0008934">
    <property type="term" value="F:inositol monophosphate 1-phosphatase activity"/>
    <property type="evidence" value="ECO:0007669"/>
    <property type="project" value="TreeGrafter"/>
</dbReference>
<dbReference type="GO" id="GO:0046872">
    <property type="term" value="F:metal ion binding"/>
    <property type="evidence" value="ECO:0007669"/>
    <property type="project" value="UniProtKB-KW"/>
</dbReference>
<dbReference type="GO" id="GO:0006020">
    <property type="term" value="P:inositol metabolic process"/>
    <property type="evidence" value="ECO:0007669"/>
    <property type="project" value="TreeGrafter"/>
</dbReference>
<dbReference type="GO" id="GO:0000105">
    <property type="term" value="P:L-histidine biosynthetic process"/>
    <property type="evidence" value="ECO:0007669"/>
    <property type="project" value="UniProtKB-UniPathway"/>
</dbReference>
<dbReference type="GO" id="GO:0046854">
    <property type="term" value="P:phosphatidylinositol phosphate biosynthetic process"/>
    <property type="evidence" value="ECO:0007669"/>
    <property type="project" value="InterPro"/>
</dbReference>
<dbReference type="GO" id="GO:0007165">
    <property type="term" value="P:signal transduction"/>
    <property type="evidence" value="ECO:0007669"/>
    <property type="project" value="TreeGrafter"/>
</dbReference>
<dbReference type="CDD" id="cd01641">
    <property type="entry name" value="Bacterial_IMPase_like_1"/>
    <property type="match status" value="1"/>
</dbReference>
<dbReference type="FunFam" id="3.30.540.10:FF:000003">
    <property type="entry name" value="Inositol-1-monophosphatase"/>
    <property type="match status" value="1"/>
</dbReference>
<dbReference type="Gene3D" id="3.40.190.80">
    <property type="match status" value="1"/>
</dbReference>
<dbReference type="Gene3D" id="3.30.540.10">
    <property type="entry name" value="Fructose-1,6-Bisphosphatase, subunit A, domain 1"/>
    <property type="match status" value="1"/>
</dbReference>
<dbReference type="InterPro" id="IPR011809">
    <property type="entry name" value="His_9_proposed"/>
</dbReference>
<dbReference type="InterPro" id="IPR020583">
    <property type="entry name" value="Inositol_monoP_metal-BS"/>
</dbReference>
<dbReference type="InterPro" id="IPR000760">
    <property type="entry name" value="Inositol_monophosphatase-like"/>
</dbReference>
<dbReference type="InterPro" id="IPR020550">
    <property type="entry name" value="Inositol_monophosphatase_CS"/>
</dbReference>
<dbReference type="NCBIfam" id="TIGR02067">
    <property type="entry name" value="his_9_HisN"/>
    <property type="match status" value="1"/>
</dbReference>
<dbReference type="PANTHER" id="PTHR20854">
    <property type="entry name" value="INOSITOL MONOPHOSPHATASE"/>
    <property type="match status" value="1"/>
</dbReference>
<dbReference type="PANTHER" id="PTHR20854:SF4">
    <property type="entry name" value="INOSITOL-1-MONOPHOSPHATASE-RELATED"/>
    <property type="match status" value="1"/>
</dbReference>
<dbReference type="Pfam" id="PF00459">
    <property type="entry name" value="Inositol_P"/>
    <property type="match status" value="1"/>
</dbReference>
<dbReference type="PRINTS" id="PR00377">
    <property type="entry name" value="IMPHPHTASES"/>
</dbReference>
<dbReference type="SUPFAM" id="SSF56655">
    <property type="entry name" value="Carbohydrate phosphatase"/>
    <property type="match status" value="1"/>
</dbReference>
<dbReference type="PROSITE" id="PS00629">
    <property type="entry name" value="IMP_1"/>
    <property type="match status" value="1"/>
</dbReference>
<dbReference type="PROSITE" id="PS00630">
    <property type="entry name" value="IMP_2"/>
    <property type="match status" value="1"/>
</dbReference>